<keyword id="KW-1185">Reference proteome</keyword>
<keyword id="KW-0687">Ribonucleoprotein</keyword>
<keyword id="KW-0689">Ribosomal protein</keyword>
<keyword id="KW-0694">RNA-binding</keyword>
<keyword id="KW-0699">rRNA-binding</keyword>
<gene>
    <name type="primary">RPL12A</name>
    <name type="ordered locus">At2g37190</name>
    <name type="ORF">T2N18.5</name>
</gene>
<sequence>MPPKLDPSQIVDVYVRVTGGEVGAASSLAPKIGPLGLAPKKIGEDIAKETAKEWKGLRVTVKLTVQNRQAKVTVVPSAAALVIKALKEPERDRKKVKNIKHNGNISFDDVTEIARIMRPRSIAKELSGTVREILGTCVSVGCTVDGKDPKDIQQEIQDGEVEIPEN</sequence>
<feature type="chain" id="PRO_0000104461" description="Large ribosomal subunit protein uL11z">
    <location>
        <begin position="1"/>
        <end position="166"/>
    </location>
</feature>
<feature type="sequence conflict" description="In Ref. 5." evidence="3" ref="5">
    <original>NIS</original>
    <variation>EHR</variation>
    <location>
        <begin position="104"/>
        <end position="106"/>
    </location>
</feature>
<feature type="sequence conflict" description="In Ref. 5; CAA79053." evidence="3" ref="5">
    <original>G</original>
    <variation>R</variation>
    <location>
        <position position="159"/>
    </location>
</feature>
<proteinExistence type="evidence at transcript level"/>
<accession>P50883</accession>
<accession>Q9ZQD3</accession>
<protein>
    <recommendedName>
        <fullName evidence="2">Large ribosomal subunit protein uL11z</fullName>
    </recommendedName>
    <alternativeName>
        <fullName>60S ribosomal protein L12-1</fullName>
    </alternativeName>
</protein>
<name>RL121_ARATH</name>
<evidence type="ECO:0000250" key="1"/>
<evidence type="ECO:0000303" key="2">
    <source>
    </source>
</evidence>
<evidence type="ECO:0000305" key="3"/>
<organism>
    <name type="scientific">Arabidopsis thaliana</name>
    <name type="common">Mouse-ear cress</name>
    <dbReference type="NCBI Taxonomy" id="3702"/>
    <lineage>
        <taxon>Eukaryota</taxon>
        <taxon>Viridiplantae</taxon>
        <taxon>Streptophyta</taxon>
        <taxon>Embryophyta</taxon>
        <taxon>Tracheophyta</taxon>
        <taxon>Spermatophyta</taxon>
        <taxon>Magnoliopsida</taxon>
        <taxon>eudicotyledons</taxon>
        <taxon>Gunneridae</taxon>
        <taxon>Pentapetalae</taxon>
        <taxon>rosids</taxon>
        <taxon>malvids</taxon>
        <taxon>Brassicales</taxon>
        <taxon>Brassicaceae</taxon>
        <taxon>Camelineae</taxon>
        <taxon>Arabidopsis</taxon>
    </lineage>
</organism>
<dbReference type="EMBL" id="AC006260">
    <property type="protein sequence ID" value="AAD18140.1"/>
    <property type="molecule type" value="Genomic_DNA"/>
</dbReference>
<dbReference type="EMBL" id="CP002685">
    <property type="protein sequence ID" value="AEC09364.1"/>
    <property type="molecule type" value="Genomic_DNA"/>
</dbReference>
<dbReference type="EMBL" id="AF372896">
    <property type="protein sequence ID" value="AAK49612.1"/>
    <property type="molecule type" value="mRNA"/>
</dbReference>
<dbReference type="EMBL" id="BT002673">
    <property type="protein sequence ID" value="AAO11589.1"/>
    <property type="molecule type" value="mRNA"/>
</dbReference>
<dbReference type="EMBL" id="AY086293">
    <property type="protein sequence ID" value="AAM64365.1"/>
    <property type="molecule type" value="mRNA"/>
</dbReference>
<dbReference type="EMBL" id="Z17756">
    <property type="protein sequence ID" value="CAA79053.1"/>
    <property type="molecule type" value="mRNA"/>
</dbReference>
<dbReference type="PIR" id="F84789">
    <property type="entry name" value="F84789"/>
</dbReference>
<dbReference type="RefSeq" id="NP_181256.1">
    <property type="nucleotide sequence ID" value="NM_129275.3"/>
</dbReference>
<dbReference type="SMR" id="P50883"/>
<dbReference type="BioGRID" id="3639">
    <property type="interactions" value="68"/>
</dbReference>
<dbReference type="FunCoup" id="P50883">
    <property type="interactions" value="3166"/>
</dbReference>
<dbReference type="IntAct" id="P50883">
    <property type="interactions" value="3"/>
</dbReference>
<dbReference type="STRING" id="3702.P50883"/>
<dbReference type="PaxDb" id="3702-AT2G37190.1"/>
<dbReference type="ProteomicsDB" id="236192"/>
<dbReference type="EnsemblPlants" id="AT2G37190.1">
    <property type="protein sequence ID" value="AT2G37190.1"/>
    <property type="gene ID" value="AT2G37190"/>
</dbReference>
<dbReference type="GeneID" id="818295"/>
<dbReference type="Gramene" id="AT2G37190.1">
    <property type="protein sequence ID" value="AT2G37190.1"/>
    <property type="gene ID" value="AT2G37190"/>
</dbReference>
<dbReference type="KEGG" id="ath:AT2G37190"/>
<dbReference type="Araport" id="AT2G37190"/>
<dbReference type="TAIR" id="AT2G37190"/>
<dbReference type="eggNOG" id="KOG0886">
    <property type="taxonomic scope" value="Eukaryota"/>
</dbReference>
<dbReference type="HOGENOM" id="CLU_074237_5_0_1"/>
<dbReference type="InParanoid" id="P50883"/>
<dbReference type="OMA" id="QPPHDVI"/>
<dbReference type="OrthoDB" id="1040307at2759"/>
<dbReference type="PhylomeDB" id="P50883"/>
<dbReference type="CD-CODE" id="4299E36E">
    <property type="entry name" value="Nucleolus"/>
</dbReference>
<dbReference type="PRO" id="PR:P50883"/>
<dbReference type="Proteomes" id="UP000006548">
    <property type="component" value="Chromosome 2"/>
</dbReference>
<dbReference type="ExpressionAtlas" id="P50883">
    <property type="expression patterns" value="baseline and differential"/>
</dbReference>
<dbReference type="GO" id="GO:0009507">
    <property type="term" value="C:chloroplast"/>
    <property type="evidence" value="ECO:0007005"/>
    <property type="project" value="TAIR"/>
</dbReference>
<dbReference type="GO" id="GO:0022625">
    <property type="term" value="C:cytosolic large ribosomal subunit"/>
    <property type="evidence" value="ECO:0007005"/>
    <property type="project" value="TAIR"/>
</dbReference>
<dbReference type="GO" id="GO:0022626">
    <property type="term" value="C:cytosolic ribosome"/>
    <property type="evidence" value="ECO:0007005"/>
    <property type="project" value="TAIR"/>
</dbReference>
<dbReference type="GO" id="GO:0005783">
    <property type="term" value="C:endoplasmic reticulum"/>
    <property type="evidence" value="ECO:0007005"/>
    <property type="project" value="TAIR"/>
</dbReference>
<dbReference type="GO" id="GO:0005730">
    <property type="term" value="C:nucleolus"/>
    <property type="evidence" value="ECO:0007005"/>
    <property type="project" value="TAIR"/>
</dbReference>
<dbReference type="GO" id="GO:0005634">
    <property type="term" value="C:nucleus"/>
    <property type="evidence" value="ECO:0007005"/>
    <property type="project" value="TAIR"/>
</dbReference>
<dbReference type="GO" id="GO:0000325">
    <property type="term" value="C:plant-type vacuole"/>
    <property type="evidence" value="ECO:0007005"/>
    <property type="project" value="TAIR"/>
</dbReference>
<dbReference type="GO" id="GO:0009506">
    <property type="term" value="C:plasmodesma"/>
    <property type="evidence" value="ECO:0007005"/>
    <property type="project" value="TAIR"/>
</dbReference>
<dbReference type="GO" id="GO:0003729">
    <property type="term" value="F:mRNA binding"/>
    <property type="evidence" value="ECO:0000314"/>
    <property type="project" value="TAIR"/>
</dbReference>
<dbReference type="GO" id="GO:0019843">
    <property type="term" value="F:rRNA binding"/>
    <property type="evidence" value="ECO:0007669"/>
    <property type="project" value="UniProtKB-KW"/>
</dbReference>
<dbReference type="GO" id="GO:0003735">
    <property type="term" value="F:structural constituent of ribosome"/>
    <property type="evidence" value="ECO:0000314"/>
    <property type="project" value="CAFA"/>
</dbReference>
<dbReference type="GO" id="GO:0008270">
    <property type="term" value="F:zinc ion binding"/>
    <property type="evidence" value="ECO:0007005"/>
    <property type="project" value="TAIR"/>
</dbReference>
<dbReference type="GO" id="GO:0006412">
    <property type="term" value="P:translation"/>
    <property type="evidence" value="ECO:0007669"/>
    <property type="project" value="InterPro"/>
</dbReference>
<dbReference type="CDD" id="cd00349">
    <property type="entry name" value="Ribosomal_L11"/>
    <property type="match status" value="1"/>
</dbReference>
<dbReference type="FunFam" id="1.10.10.250:FF:000002">
    <property type="entry name" value="60S ribosomal protein L12"/>
    <property type="match status" value="1"/>
</dbReference>
<dbReference type="FunFam" id="3.30.1550.10:FF:000002">
    <property type="entry name" value="60S ribosomal protein L12"/>
    <property type="match status" value="1"/>
</dbReference>
<dbReference type="Gene3D" id="1.10.10.250">
    <property type="entry name" value="Ribosomal protein L11, C-terminal domain"/>
    <property type="match status" value="1"/>
</dbReference>
<dbReference type="Gene3D" id="3.30.1550.10">
    <property type="entry name" value="Ribosomal protein L11/L12, N-terminal domain"/>
    <property type="match status" value="1"/>
</dbReference>
<dbReference type="HAMAP" id="MF_00736">
    <property type="entry name" value="Ribosomal_uL11"/>
    <property type="match status" value="1"/>
</dbReference>
<dbReference type="InterPro" id="IPR000911">
    <property type="entry name" value="Ribosomal_uL11"/>
</dbReference>
<dbReference type="InterPro" id="IPR020783">
    <property type="entry name" value="Ribosomal_uL11_C"/>
</dbReference>
<dbReference type="InterPro" id="IPR036769">
    <property type="entry name" value="Ribosomal_uL11_C_sf"/>
</dbReference>
<dbReference type="InterPro" id="IPR020785">
    <property type="entry name" value="Ribosomal_uL11_CS"/>
</dbReference>
<dbReference type="InterPro" id="IPR020784">
    <property type="entry name" value="Ribosomal_uL11_N"/>
</dbReference>
<dbReference type="InterPro" id="IPR036796">
    <property type="entry name" value="Ribosomal_uL11_N_sf"/>
</dbReference>
<dbReference type="PANTHER" id="PTHR11661">
    <property type="entry name" value="60S RIBOSOMAL PROTEIN L12"/>
    <property type="match status" value="1"/>
</dbReference>
<dbReference type="PANTHER" id="PTHR11661:SF46">
    <property type="entry name" value="LARGE RIBOSOMAL SUBUNIT PROTEIN UL11Y-RELATED"/>
    <property type="match status" value="1"/>
</dbReference>
<dbReference type="Pfam" id="PF00298">
    <property type="entry name" value="Ribosomal_L11"/>
    <property type="match status" value="1"/>
</dbReference>
<dbReference type="Pfam" id="PF03946">
    <property type="entry name" value="Ribosomal_L11_N"/>
    <property type="match status" value="1"/>
</dbReference>
<dbReference type="SMART" id="SM00649">
    <property type="entry name" value="RL11"/>
    <property type="match status" value="1"/>
</dbReference>
<dbReference type="SUPFAM" id="SSF54747">
    <property type="entry name" value="Ribosomal L11/L12e N-terminal domain"/>
    <property type="match status" value="1"/>
</dbReference>
<dbReference type="SUPFAM" id="SSF46906">
    <property type="entry name" value="Ribosomal protein L11, C-terminal domain"/>
    <property type="match status" value="1"/>
</dbReference>
<dbReference type="PROSITE" id="PS00359">
    <property type="entry name" value="RIBOSOMAL_L11"/>
    <property type="match status" value="1"/>
</dbReference>
<reference key="1">
    <citation type="journal article" date="1999" name="Nature">
        <title>Sequence and analysis of chromosome 2 of the plant Arabidopsis thaliana.</title>
        <authorList>
            <person name="Lin X."/>
            <person name="Kaul S."/>
            <person name="Rounsley S.D."/>
            <person name="Shea T.P."/>
            <person name="Benito M.-I."/>
            <person name="Town C.D."/>
            <person name="Fujii C.Y."/>
            <person name="Mason T.M."/>
            <person name="Bowman C.L."/>
            <person name="Barnstead M.E."/>
            <person name="Feldblyum T.V."/>
            <person name="Buell C.R."/>
            <person name="Ketchum K.A."/>
            <person name="Lee J.J."/>
            <person name="Ronning C.M."/>
            <person name="Koo H.L."/>
            <person name="Moffat K.S."/>
            <person name="Cronin L.A."/>
            <person name="Shen M."/>
            <person name="Pai G."/>
            <person name="Van Aken S."/>
            <person name="Umayam L."/>
            <person name="Tallon L.J."/>
            <person name="Gill J.E."/>
            <person name="Adams M.D."/>
            <person name="Carrera A.J."/>
            <person name="Creasy T.H."/>
            <person name="Goodman H.M."/>
            <person name="Somerville C.R."/>
            <person name="Copenhaver G.P."/>
            <person name="Preuss D."/>
            <person name="Nierman W.C."/>
            <person name="White O."/>
            <person name="Eisen J.A."/>
            <person name="Salzberg S.L."/>
            <person name="Fraser C.M."/>
            <person name="Venter J.C."/>
        </authorList>
    </citation>
    <scope>NUCLEOTIDE SEQUENCE [LARGE SCALE GENOMIC DNA]</scope>
    <source>
        <strain>cv. Columbia</strain>
    </source>
</reference>
<reference key="2">
    <citation type="journal article" date="2017" name="Plant J.">
        <title>Araport11: a complete reannotation of the Arabidopsis thaliana reference genome.</title>
        <authorList>
            <person name="Cheng C.Y."/>
            <person name="Krishnakumar V."/>
            <person name="Chan A.P."/>
            <person name="Thibaud-Nissen F."/>
            <person name="Schobel S."/>
            <person name="Town C.D."/>
        </authorList>
    </citation>
    <scope>GENOME REANNOTATION</scope>
    <source>
        <strain>cv. Columbia</strain>
    </source>
</reference>
<reference key="3">
    <citation type="journal article" date="2003" name="Science">
        <title>Empirical analysis of transcriptional activity in the Arabidopsis genome.</title>
        <authorList>
            <person name="Yamada K."/>
            <person name="Lim J."/>
            <person name="Dale J.M."/>
            <person name="Chen H."/>
            <person name="Shinn P."/>
            <person name="Palm C.J."/>
            <person name="Southwick A.M."/>
            <person name="Wu H.C."/>
            <person name="Kim C.J."/>
            <person name="Nguyen M."/>
            <person name="Pham P.K."/>
            <person name="Cheuk R.F."/>
            <person name="Karlin-Newmann G."/>
            <person name="Liu S.X."/>
            <person name="Lam B."/>
            <person name="Sakano H."/>
            <person name="Wu T."/>
            <person name="Yu G."/>
            <person name="Miranda M."/>
            <person name="Quach H.L."/>
            <person name="Tripp M."/>
            <person name="Chang C.H."/>
            <person name="Lee J.M."/>
            <person name="Toriumi M.J."/>
            <person name="Chan M.M."/>
            <person name="Tang C.C."/>
            <person name="Onodera C.S."/>
            <person name="Deng J.M."/>
            <person name="Akiyama K."/>
            <person name="Ansari Y."/>
            <person name="Arakawa T."/>
            <person name="Banh J."/>
            <person name="Banno F."/>
            <person name="Bowser L."/>
            <person name="Brooks S.Y."/>
            <person name="Carninci P."/>
            <person name="Chao Q."/>
            <person name="Choy N."/>
            <person name="Enju A."/>
            <person name="Goldsmith A.D."/>
            <person name="Gurjal M."/>
            <person name="Hansen N.F."/>
            <person name="Hayashizaki Y."/>
            <person name="Johnson-Hopson C."/>
            <person name="Hsuan V.W."/>
            <person name="Iida K."/>
            <person name="Karnes M."/>
            <person name="Khan S."/>
            <person name="Koesema E."/>
            <person name="Ishida J."/>
            <person name="Jiang P.X."/>
            <person name="Jones T."/>
            <person name="Kawai J."/>
            <person name="Kamiya A."/>
            <person name="Meyers C."/>
            <person name="Nakajima M."/>
            <person name="Narusaka M."/>
            <person name="Seki M."/>
            <person name="Sakurai T."/>
            <person name="Satou M."/>
            <person name="Tamse R."/>
            <person name="Vaysberg M."/>
            <person name="Wallender E.K."/>
            <person name="Wong C."/>
            <person name="Yamamura Y."/>
            <person name="Yuan S."/>
            <person name="Shinozaki K."/>
            <person name="Davis R.W."/>
            <person name="Theologis A."/>
            <person name="Ecker J.R."/>
        </authorList>
    </citation>
    <scope>NUCLEOTIDE SEQUENCE [LARGE SCALE MRNA]</scope>
    <source>
        <strain>cv. Columbia</strain>
    </source>
</reference>
<reference key="4">
    <citation type="submission" date="2002-03" db="EMBL/GenBank/DDBJ databases">
        <title>Full-length cDNA from Arabidopsis thaliana.</title>
        <authorList>
            <person name="Brover V.V."/>
            <person name="Troukhan M.E."/>
            <person name="Alexandrov N.A."/>
            <person name="Lu Y.-P."/>
            <person name="Flavell R.B."/>
            <person name="Feldmann K.A."/>
        </authorList>
    </citation>
    <scope>NUCLEOTIDE SEQUENCE [LARGE SCALE MRNA]</scope>
</reference>
<reference key="5">
    <citation type="journal article" date="1993" name="Plant J.">
        <title>An inventory of 1152 expressed sequence tags obtained by partial sequencing of cDNAs from Arabidopsis thaliana.</title>
        <authorList>
            <person name="Hoefte H."/>
            <person name="Desprez T."/>
            <person name="Amselem J."/>
            <person name="Chiapello H."/>
            <person name="Rouze P."/>
            <person name="Caboche M."/>
            <person name="Moisan A."/>
            <person name="Jourjon M.-F."/>
            <person name="Charpenteau J.-L."/>
            <person name="Berthomieu P."/>
            <person name="Guerrier D."/>
            <person name="Giraudat J."/>
            <person name="Quigley F."/>
            <person name="Thomas F."/>
            <person name="Yu D.-Y."/>
            <person name="Mache R."/>
            <person name="Raynal M."/>
            <person name="Cooke R."/>
            <person name="Grellet F."/>
            <person name="Delseny M."/>
            <person name="Parmentier Y."/>
            <person name="de Marcillac G."/>
            <person name="Gigot C."/>
            <person name="Fleck J."/>
            <person name="Philipps G."/>
            <person name="Axelos M."/>
            <person name="Bardet C."/>
            <person name="Tremousaygue D."/>
            <person name="Lescure B."/>
        </authorList>
    </citation>
    <scope>NUCLEOTIDE SEQUENCE [LARGE SCALE MRNA] OF 104-166</scope>
    <source>
        <strain>cv. Columbia</strain>
        <tissue>Green siliques</tissue>
    </source>
</reference>
<reference key="6">
    <citation type="journal article" date="2001" name="Plant Physiol.">
        <title>The organization of cytoplasmic ribosomal protein genes in the Arabidopsis genome.</title>
        <authorList>
            <person name="Barakat A."/>
            <person name="Szick-Miranda K."/>
            <person name="Chang I.-F."/>
            <person name="Guyot R."/>
            <person name="Blanc G."/>
            <person name="Cooke R."/>
            <person name="Delseny M."/>
            <person name="Bailey-Serres J."/>
        </authorList>
    </citation>
    <scope>GENE FAMILY ORGANIZATION</scope>
    <scope>NOMENCLATURE</scope>
</reference>
<reference key="7">
    <citation type="journal article" date="2023" name="Plant Cell">
        <title>An updated nomenclature for plant ribosomal protein genes.</title>
        <authorList>
            <person name="Scarpin M.R."/>
            <person name="Busche M."/>
            <person name="Martinez R.E."/>
            <person name="Harper L.C."/>
            <person name="Reiser L."/>
            <person name="Szakonyi D."/>
            <person name="Merchante C."/>
            <person name="Lan T."/>
            <person name="Xiong W."/>
            <person name="Mo B."/>
            <person name="Tang G."/>
            <person name="Chen X."/>
            <person name="Bailey-Serres J."/>
            <person name="Browning K.S."/>
            <person name="Brunkard J.O."/>
        </authorList>
    </citation>
    <scope>NOMENCLATURE</scope>
</reference>
<comment type="function">
    <text evidence="1">Binds directly to 26S ribosomal RNA.</text>
</comment>
<comment type="similarity">
    <text evidence="3">Belongs to the universal ribosomal protein uL11 family.</text>
</comment>